<reference key="1">
    <citation type="journal article" date="2010" name="Genome Biol. Evol.">
        <title>Continuing evolution of Burkholderia mallei through genome reduction and large-scale rearrangements.</title>
        <authorList>
            <person name="Losada L."/>
            <person name="Ronning C.M."/>
            <person name="DeShazer D."/>
            <person name="Woods D."/>
            <person name="Fedorova N."/>
            <person name="Kim H.S."/>
            <person name="Shabalina S.A."/>
            <person name="Pearson T.R."/>
            <person name="Brinkac L."/>
            <person name="Tan P."/>
            <person name="Nandi T."/>
            <person name="Crabtree J."/>
            <person name="Badger J."/>
            <person name="Beckstrom-Sternberg S."/>
            <person name="Saqib M."/>
            <person name="Schutzer S.E."/>
            <person name="Keim P."/>
            <person name="Nierman W.C."/>
        </authorList>
    </citation>
    <scope>NUCLEOTIDE SEQUENCE [LARGE SCALE GENOMIC DNA]</scope>
    <source>
        <strain>1106a</strain>
    </source>
</reference>
<comment type="function">
    <text evidence="1">Binds to 23S rRNA. Forms part of two intersubunit bridges in the 70S ribosome.</text>
</comment>
<comment type="subunit">
    <text evidence="1">Part of the 50S ribosomal subunit. Forms a cluster with proteins L3 and L19. In the 70S ribosome, L14 and L19 interact and together make contacts with the 16S rRNA in bridges B5 and B8.</text>
</comment>
<comment type="similarity">
    <text evidence="1">Belongs to the universal ribosomal protein uL14 family.</text>
</comment>
<dbReference type="EMBL" id="CP000572">
    <property type="protein sequence ID" value="ABN90688.1"/>
    <property type="molecule type" value="Genomic_DNA"/>
</dbReference>
<dbReference type="RefSeq" id="WP_004197951.1">
    <property type="nucleotide sequence ID" value="NC_009076.1"/>
</dbReference>
<dbReference type="SMR" id="A3P0A3"/>
<dbReference type="GeneID" id="93171007"/>
<dbReference type="KEGG" id="bpl:BURPS1106A_3794"/>
<dbReference type="HOGENOM" id="CLU_095071_2_1_4"/>
<dbReference type="Proteomes" id="UP000006738">
    <property type="component" value="Chromosome I"/>
</dbReference>
<dbReference type="GO" id="GO:0022625">
    <property type="term" value="C:cytosolic large ribosomal subunit"/>
    <property type="evidence" value="ECO:0007669"/>
    <property type="project" value="TreeGrafter"/>
</dbReference>
<dbReference type="GO" id="GO:0070180">
    <property type="term" value="F:large ribosomal subunit rRNA binding"/>
    <property type="evidence" value="ECO:0007669"/>
    <property type="project" value="TreeGrafter"/>
</dbReference>
<dbReference type="GO" id="GO:0003735">
    <property type="term" value="F:structural constituent of ribosome"/>
    <property type="evidence" value="ECO:0007669"/>
    <property type="project" value="InterPro"/>
</dbReference>
<dbReference type="GO" id="GO:0006412">
    <property type="term" value="P:translation"/>
    <property type="evidence" value="ECO:0007669"/>
    <property type="project" value="UniProtKB-UniRule"/>
</dbReference>
<dbReference type="CDD" id="cd00337">
    <property type="entry name" value="Ribosomal_uL14"/>
    <property type="match status" value="1"/>
</dbReference>
<dbReference type="FunFam" id="2.40.150.20:FF:000001">
    <property type="entry name" value="50S ribosomal protein L14"/>
    <property type="match status" value="1"/>
</dbReference>
<dbReference type="Gene3D" id="2.40.150.20">
    <property type="entry name" value="Ribosomal protein L14"/>
    <property type="match status" value="1"/>
</dbReference>
<dbReference type="HAMAP" id="MF_01367">
    <property type="entry name" value="Ribosomal_uL14"/>
    <property type="match status" value="1"/>
</dbReference>
<dbReference type="InterPro" id="IPR000218">
    <property type="entry name" value="Ribosomal_uL14"/>
</dbReference>
<dbReference type="InterPro" id="IPR005745">
    <property type="entry name" value="Ribosomal_uL14_bac-type"/>
</dbReference>
<dbReference type="InterPro" id="IPR019972">
    <property type="entry name" value="Ribosomal_uL14_CS"/>
</dbReference>
<dbReference type="InterPro" id="IPR036853">
    <property type="entry name" value="Ribosomal_uL14_sf"/>
</dbReference>
<dbReference type="NCBIfam" id="TIGR01067">
    <property type="entry name" value="rplN_bact"/>
    <property type="match status" value="1"/>
</dbReference>
<dbReference type="PANTHER" id="PTHR11761">
    <property type="entry name" value="50S/60S RIBOSOMAL PROTEIN L14/L23"/>
    <property type="match status" value="1"/>
</dbReference>
<dbReference type="PANTHER" id="PTHR11761:SF3">
    <property type="entry name" value="LARGE RIBOSOMAL SUBUNIT PROTEIN UL14M"/>
    <property type="match status" value="1"/>
</dbReference>
<dbReference type="Pfam" id="PF00238">
    <property type="entry name" value="Ribosomal_L14"/>
    <property type="match status" value="1"/>
</dbReference>
<dbReference type="SMART" id="SM01374">
    <property type="entry name" value="Ribosomal_L14"/>
    <property type="match status" value="1"/>
</dbReference>
<dbReference type="SUPFAM" id="SSF50193">
    <property type="entry name" value="Ribosomal protein L14"/>
    <property type="match status" value="1"/>
</dbReference>
<dbReference type="PROSITE" id="PS00049">
    <property type="entry name" value="RIBOSOMAL_L14"/>
    <property type="match status" value="1"/>
</dbReference>
<name>RL14_BURP0</name>
<feature type="chain" id="PRO_1000055536" description="Large ribosomal subunit protein uL14">
    <location>
        <begin position="1"/>
        <end position="122"/>
    </location>
</feature>
<proteinExistence type="inferred from homology"/>
<accession>A3P0A3</accession>
<keyword id="KW-0687">Ribonucleoprotein</keyword>
<keyword id="KW-0689">Ribosomal protein</keyword>
<keyword id="KW-0694">RNA-binding</keyword>
<keyword id="KW-0699">rRNA-binding</keyword>
<organism>
    <name type="scientific">Burkholderia pseudomallei (strain 1106a)</name>
    <dbReference type="NCBI Taxonomy" id="357348"/>
    <lineage>
        <taxon>Bacteria</taxon>
        <taxon>Pseudomonadati</taxon>
        <taxon>Pseudomonadota</taxon>
        <taxon>Betaproteobacteria</taxon>
        <taxon>Burkholderiales</taxon>
        <taxon>Burkholderiaceae</taxon>
        <taxon>Burkholderia</taxon>
        <taxon>pseudomallei group</taxon>
    </lineage>
</organism>
<sequence>MIQTESRLEVADNTGAREVMCIKVLGGSKRRYASIGDIIKVSVKEATPRGRVKKGEIYNAVVVRTAKGVRRQDGSLIKFDGNAAVLLNNKLEPIGTRIFGPVTRELRSERFMKIVSLAPEVL</sequence>
<evidence type="ECO:0000255" key="1">
    <source>
        <dbReference type="HAMAP-Rule" id="MF_01367"/>
    </source>
</evidence>
<evidence type="ECO:0000305" key="2"/>
<protein>
    <recommendedName>
        <fullName evidence="1">Large ribosomal subunit protein uL14</fullName>
    </recommendedName>
    <alternativeName>
        <fullName evidence="2">50S ribosomal protein L14</fullName>
    </alternativeName>
</protein>
<gene>
    <name evidence="1" type="primary">rplN</name>
    <name type="ordered locus">BURPS1106A_3794</name>
</gene>